<evidence type="ECO:0000255" key="1">
    <source>
        <dbReference type="HAMAP-Rule" id="MF_00145"/>
    </source>
</evidence>
<protein>
    <recommendedName>
        <fullName evidence="1">Phosphoglycerate kinase</fullName>
        <ecNumber evidence="1">2.7.2.3</ecNumber>
    </recommendedName>
</protein>
<proteinExistence type="inferred from homology"/>
<feature type="chain" id="PRO_1000058087" description="Phosphoglycerate kinase">
    <location>
        <begin position="1"/>
        <end position="393"/>
    </location>
</feature>
<feature type="binding site" evidence="1">
    <location>
        <begin position="21"/>
        <end position="23"/>
    </location>
    <ligand>
        <name>substrate</name>
    </ligand>
</feature>
<feature type="binding site" evidence="1">
    <location>
        <position position="36"/>
    </location>
    <ligand>
        <name>substrate</name>
    </ligand>
</feature>
<feature type="binding site" evidence="1">
    <location>
        <begin position="59"/>
        <end position="62"/>
    </location>
    <ligand>
        <name>substrate</name>
    </ligand>
</feature>
<feature type="binding site" evidence="1">
    <location>
        <position position="114"/>
    </location>
    <ligand>
        <name>substrate</name>
    </ligand>
</feature>
<feature type="binding site" evidence="1">
    <location>
        <position position="147"/>
    </location>
    <ligand>
        <name>substrate</name>
    </ligand>
</feature>
<feature type="binding site" evidence="1">
    <location>
        <position position="198"/>
    </location>
    <ligand>
        <name>ATP</name>
        <dbReference type="ChEBI" id="CHEBI:30616"/>
    </ligand>
</feature>
<feature type="binding site" evidence="1">
    <location>
        <position position="320"/>
    </location>
    <ligand>
        <name>ATP</name>
        <dbReference type="ChEBI" id="CHEBI:30616"/>
    </ligand>
</feature>
<feature type="binding site" evidence="1">
    <location>
        <begin position="346"/>
        <end position="349"/>
    </location>
    <ligand>
        <name>ATP</name>
        <dbReference type="ChEBI" id="CHEBI:30616"/>
    </ligand>
</feature>
<gene>
    <name evidence="1" type="primary">pgk</name>
    <name type="ordered locus">Tbd_0161</name>
</gene>
<organism>
    <name type="scientific">Thiobacillus denitrificans (strain ATCC 25259 / T1)</name>
    <dbReference type="NCBI Taxonomy" id="292415"/>
    <lineage>
        <taxon>Bacteria</taxon>
        <taxon>Pseudomonadati</taxon>
        <taxon>Pseudomonadota</taxon>
        <taxon>Betaproteobacteria</taxon>
        <taxon>Nitrosomonadales</taxon>
        <taxon>Thiobacillaceae</taxon>
        <taxon>Thiobacillus</taxon>
    </lineage>
</organism>
<reference key="1">
    <citation type="journal article" date="2006" name="J. Bacteriol.">
        <title>The genome sequence of the obligately chemolithoautotrophic, facultatively anaerobic bacterium Thiobacillus denitrificans.</title>
        <authorList>
            <person name="Beller H.R."/>
            <person name="Chain P.S."/>
            <person name="Letain T.E."/>
            <person name="Chakicherla A."/>
            <person name="Larimer F.W."/>
            <person name="Richardson P.M."/>
            <person name="Coleman M.A."/>
            <person name="Wood A.P."/>
            <person name="Kelly D.P."/>
        </authorList>
    </citation>
    <scope>NUCLEOTIDE SEQUENCE [LARGE SCALE GENOMIC DNA]</scope>
    <source>
        <strain>ATCC 25259 / T1</strain>
    </source>
</reference>
<accession>Q3SMD2</accession>
<dbReference type="EC" id="2.7.2.3" evidence="1"/>
<dbReference type="EMBL" id="CP000116">
    <property type="protein sequence ID" value="AAZ96114.1"/>
    <property type="molecule type" value="Genomic_DNA"/>
</dbReference>
<dbReference type="RefSeq" id="WP_011310674.1">
    <property type="nucleotide sequence ID" value="NC_007404.1"/>
</dbReference>
<dbReference type="SMR" id="Q3SMD2"/>
<dbReference type="STRING" id="292415.Tbd_0161"/>
<dbReference type="KEGG" id="tbd:Tbd_0161"/>
<dbReference type="eggNOG" id="COG0126">
    <property type="taxonomic scope" value="Bacteria"/>
</dbReference>
<dbReference type="HOGENOM" id="CLU_025427_0_2_4"/>
<dbReference type="OrthoDB" id="9808460at2"/>
<dbReference type="UniPathway" id="UPA00109">
    <property type="reaction ID" value="UER00185"/>
</dbReference>
<dbReference type="Proteomes" id="UP000008291">
    <property type="component" value="Chromosome"/>
</dbReference>
<dbReference type="GO" id="GO:0005829">
    <property type="term" value="C:cytosol"/>
    <property type="evidence" value="ECO:0007669"/>
    <property type="project" value="TreeGrafter"/>
</dbReference>
<dbReference type="GO" id="GO:0043531">
    <property type="term" value="F:ADP binding"/>
    <property type="evidence" value="ECO:0007669"/>
    <property type="project" value="TreeGrafter"/>
</dbReference>
<dbReference type="GO" id="GO:0005524">
    <property type="term" value="F:ATP binding"/>
    <property type="evidence" value="ECO:0007669"/>
    <property type="project" value="UniProtKB-KW"/>
</dbReference>
<dbReference type="GO" id="GO:0004618">
    <property type="term" value="F:phosphoglycerate kinase activity"/>
    <property type="evidence" value="ECO:0007669"/>
    <property type="project" value="UniProtKB-UniRule"/>
</dbReference>
<dbReference type="GO" id="GO:0006094">
    <property type="term" value="P:gluconeogenesis"/>
    <property type="evidence" value="ECO:0007669"/>
    <property type="project" value="TreeGrafter"/>
</dbReference>
<dbReference type="GO" id="GO:0006096">
    <property type="term" value="P:glycolytic process"/>
    <property type="evidence" value="ECO:0007669"/>
    <property type="project" value="UniProtKB-UniRule"/>
</dbReference>
<dbReference type="FunFam" id="3.40.50.1260:FF:000001">
    <property type="entry name" value="Phosphoglycerate kinase"/>
    <property type="match status" value="1"/>
</dbReference>
<dbReference type="FunFam" id="3.40.50.1260:FF:000002">
    <property type="entry name" value="Phosphoglycerate kinase"/>
    <property type="match status" value="1"/>
</dbReference>
<dbReference type="Gene3D" id="3.40.50.1260">
    <property type="entry name" value="Phosphoglycerate kinase, N-terminal domain"/>
    <property type="match status" value="2"/>
</dbReference>
<dbReference type="HAMAP" id="MF_00145">
    <property type="entry name" value="Phosphoglyc_kinase"/>
    <property type="match status" value="1"/>
</dbReference>
<dbReference type="InterPro" id="IPR001576">
    <property type="entry name" value="Phosphoglycerate_kinase"/>
</dbReference>
<dbReference type="InterPro" id="IPR015911">
    <property type="entry name" value="Phosphoglycerate_kinase_CS"/>
</dbReference>
<dbReference type="InterPro" id="IPR015824">
    <property type="entry name" value="Phosphoglycerate_kinase_N"/>
</dbReference>
<dbReference type="InterPro" id="IPR036043">
    <property type="entry name" value="Phosphoglycerate_kinase_sf"/>
</dbReference>
<dbReference type="PANTHER" id="PTHR11406">
    <property type="entry name" value="PHOSPHOGLYCERATE KINASE"/>
    <property type="match status" value="1"/>
</dbReference>
<dbReference type="PANTHER" id="PTHR11406:SF23">
    <property type="entry name" value="PHOSPHOGLYCERATE KINASE 1, CHLOROPLASTIC-RELATED"/>
    <property type="match status" value="1"/>
</dbReference>
<dbReference type="Pfam" id="PF00162">
    <property type="entry name" value="PGK"/>
    <property type="match status" value="1"/>
</dbReference>
<dbReference type="PIRSF" id="PIRSF000724">
    <property type="entry name" value="Pgk"/>
    <property type="match status" value="1"/>
</dbReference>
<dbReference type="PRINTS" id="PR00477">
    <property type="entry name" value="PHGLYCKINASE"/>
</dbReference>
<dbReference type="SUPFAM" id="SSF53748">
    <property type="entry name" value="Phosphoglycerate kinase"/>
    <property type="match status" value="1"/>
</dbReference>
<dbReference type="PROSITE" id="PS00111">
    <property type="entry name" value="PGLYCERATE_KINASE"/>
    <property type="match status" value="1"/>
</dbReference>
<comment type="catalytic activity">
    <reaction evidence="1">
        <text>(2R)-3-phosphoglycerate + ATP = (2R)-3-phospho-glyceroyl phosphate + ADP</text>
        <dbReference type="Rhea" id="RHEA:14801"/>
        <dbReference type="ChEBI" id="CHEBI:30616"/>
        <dbReference type="ChEBI" id="CHEBI:57604"/>
        <dbReference type="ChEBI" id="CHEBI:58272"/>
        <dbReference type="ChEBI" id="CHEBI:456216"/>
        <dbReference type="EC" id="2.7.2.3"/>
    </reaction>
</comment>
<comment type="pathway">
    <text evidence="1">Carbohydrate degradation; glycolysis; pyruvate from D-glyceraldehyde 3-phosphate: step 2/5.</text>
</comment>
<comment type="subunit">
    <text evidence="1">Monomer.</text>
</comment>
<comment type="subcellular location">
    <subcellularLocation>
        <location evidence="1">Cytoplasm</location>
    </subcellularLocation>
</comment>
<comment type="similarity">
    <text evidence="1">Belongs to the phosphoglycerate kinase family.</text>
</comment>
<name>PGK_THIDA</name>
<sequence>MAFIRVTDLDLAGKRVFIRADMNVPVKDGKVTSDARITASMRTIEHCMRAGAKVMVTSHLGRPTEGEFKEEDSLKPVVDVIAQKLGKNVRLIREWTEGGFDVANGELVVLENCRVNKGEKKNVDETAKKYAALCDVFVMDAFGTAHRAEASTHGIAKFAPTAAAGILLTEELDALAKALANPARPMVAIVGGSKVSTKLTVLEALSEKVDQLVVGGGIANTFLAAMGKNVGKSLCEHDLIPTAKTLIEKMAARGASIPIAVDVVCGKKFDANEPAVLKSADEVADDDMIFDIGPKSAQELADIIAKAGTIVWNGPVGVFEFDQFGEGTKTVSMAIANAPGFSLAGGGDTIAAIQKYDIYDKVSYISTAGGAFLEYLEGKVLPAVAILEERAQG</sequence>
<keyword id="KW-0067">ATP-binding</keyword>
<keyword id="KW-0963">Cytoplasm</keyword>
<keyword id="KW-0324">Glycolysis</keyword>
<keyword id="KW-0418">Kinase</keyword>
<keyword id="KW-0547">Nucleotide-binding</keyword>
<keyword id="KW-1185">Reference proteome</keyword>
<keyword id="KW-0808">Transferase</keyword>